<dbReference type="EC" id="7.1.2.2" evidence="1"/>
<dbReference type="EMBL" id="CP000575">
    <property type="protein sequence ID" value="ABN70266.1"/>
    <property type="molecule type" value="Genomic_DNA"/>
</dbReference>
<dbReference type="RefSeq" id="WP_011839457.1">
    <property type="nucleotide sequence ID" value="NC_009033.1"/>
</dbReference>
<dbReference type="SMR" id="A3DNQ6"/>
<dbReference type="STRING" id="399550.Smar_1171"/>
<dbReference type="GeneID" id="4906889"/>
<dbReference type="KEGG" id="smr:Smar_1171"/>
<dbReference type="eggNOG" id="arCOG00868">
    <property type="taxonomic scope" value="Archaea"/>
</dbReference>
<dbReference type="HOGENOM" id="CLU_008162_3_1_2"/>
<dbReference type="OrthoDB" id="115235at2157"/>
<dbReference type="Proteomes" id="UP000000254">
    <property type="component" value="Chromosome"/>
</dbReference>
<dbReference type="GO" id="GO:0005886">
    <property type="term" value="C:plasma membrane"/>
    <property type="evidence" value="ECO:0007669"/>
    <property type="project" value="UniProtKB-SubCell"/>
</dbReference>
<dbReference type="GO" id="GO:0005524">
    <property type="term" value="F:ATP binding"/>
    <property type="evidence" value="ECO:0007669"/>
    <property type="project" value="UniProtKB-UniRule"/>
</dbReference>
<dbReference type="GO" id="GO:0046933">
    <property type="term" value="F:proton-transporting ATP synthase activity, rotational mechanism"/>
    <property type="evidence" value="ECO:0007669"/>
    <property type="project" value="UniProtKB-UniRule"/>
</dbReference>
<dbReference type="GO" id="GO:0046961">
    <property type="term" value="F:proton-transporting ATPase activity, rotational mechanism"/>
    <property type="evidence" value="ECO:0007669"/>
    <property type="project" value="InterPro"/>
</dbReference>
<dbReference type="GO" id="GO:0042777">
    <property type="term" value="P:proton motive force-driven plasma membrane ATP synthesis"/>
    <property type="evidence" value="ECO:0007669"/>
    <property type="project" value="UniProtKB-UniRule"/>
</dbReference>
<dbReference type="CDD" id="cd18111">
    <property type="entry name" value="ATP-synt_V_A-type_alpha_C"/>
    <property type="match status" value="1"/>
</dbReference>
<dbReference type="CDD" id="cd18119">
    <property type="entry name" value="ATP-synt_V_A-type_alpha_N"/>
    <property type="match status" value="1"/>
</dbReference>
<dbReference type="CDD" id="cd01134">
    <property type="entry name" value="V_A-ATPase_A"/>
    <property type="match status" value="1"/>
</dbReference>
<dbReference type="FunFam" id="1.10.1140.10:FF:000002">
    <property type="entry name" value="V-type proton ATPase catalytic subunit A"/>
    <property type="match status" value="1"/>
</dbReference>
<dbReference type="FunFam" id="2.40.30.20:FF:000002">
    <property type="entry name" value="V-type proton ATPase catalytic subunit A"/>
    <property type="match status" value="1"/>
</dbReference>
<dbReference type="Gene3D" id="2.40.30.20">
    <property type="match status" value="1"/>
</dbReference>
<dbReference type="Gene3D" id="2.40.50.100">
    <property type="match status" value="1"/>
</dbReference>
<dbReference type="Gene3D" id="1.10.1140.10">
    <property type="entry name" value="Bovine Mitochondrial F1-atpase, Atp Synthase Beta Chain, Chain D, domain 3"/>
    <property type="match status" value="1"/>
</dbReference>
<dbReference type="Gene3D" id="3.40.50.300">
    <property type="entry name" value="P-loop containing nucleotide triphosphate hydrolases"/>
    <property type="match status" value="1"/>
</dbReference>
<dbReference type="HAMAP" id="MF_00309">
    <property type="entry name" value="ATP_synth_A_arch"/>
    <property type="match status" value="1"/>
</dbReference>
<dbReference type="InterPro" id="IPR055190">
    <property type="entry name" value="ATP-synt_VA_C"/>
</dbReference>
<dbReference type="InterPro" id="IPR031686">
    <property type="entry name" value="ATP-synth_a_Xtn"/>
</dbReference>
<dbReference type="InterPro" id="IPR023366">
    <property type="entry name" value="ATP_synth_asu-like_sf"/>
</dbReference>
<dbReference type="InterPro" id="IPR020003">
    <property type="entry name" value="ATPase_a/bsu_AS"/>
</dbReference>
<dbReference type="InterPro" id="IPR004100">
    <property type="entry name" value="ATPase_F1/V1/A1_a/bsu_N"/>
</dbReference>
<dbReference type="InterPro" id="IPR036121">
    <property type="entry name" value="ATPase_F1/V1/A1_a/bsu_N_sf"/>
</dbReference>
<dbReference type="InterPro" id="IPR000194">
    <property type="entry name" value="ATPase_F1/V1/A1_a/bsu_nucl-bd"/>
</dbReference>
<dbReference type="InterPro" id="IPR024034">
    <property type="entry name" value="ATPase_F1/V1_b/a_C"/>
</dbReference>
<dbReference type="InterPro" id="IPR027417">
    <property type="entry name" value="P-loop_NTPase"/>
</dbReference>
<dbReference type="InterPro" id="IPR022878">
    <property type="entry name" value="V-ATPase_asu"/>
</dbReference>
<dbReference type="NCBIfam" id="NF003220">
    <property type="entry name" value="PRK04192.1"/>
    <property type="match status" value="1"/>
</dbReference>
<dbReference type="PANTHER" id="PTHR43607:SF1">
    <property type="entry name" value="H(+)-TRANSPORTING TWO-SECTOR ATPASE"/>
    <property type="match status" value="1"/>
</dbReference>
<dbReference type="PANTHER" id="PTHR43607">
    <property type="entry name" value="V-TYPE PROTON ATPASE CATALYTIC SUBUNIT A"/>
    <property type="match status" value="1"/>
</dbReference>
<dbReference type="Pfam" id="PF00006">
    <property type="entry name" value="ATP-synt_ab"/>
    <property type="match status" value="1"/>
</dbReference>
<dbReference type="Pfam" id="PF02874">
    <property type="entry name" value="ATP-synt_ab_N"/>
    <property type="match status" value="1"/>
</dbReference>
<dbReference type="Pfam" id="PF16886">
    <property type="entry name" value="ATP-synt_ab_Xtn"/>
    <property type="match status" value="1"/>
</dbReference>
<dbReference type="Pfam" id="PF22919">
    <property type="entry name" value="ATP-synt_VA_C"/>
    <property type="match status" value="1"/>
</dbReference>
<dbReference type="SUPFAM" id="SSF47917">
    <property type="entry name" value="C-terminal domain of alpha and beta subunits of F1 ATP synthase"/>
    <property type="match status" value="1"/>
</dbReference>
<dbReference type="SUPFAM" id="SSF50615">
    <property type="entry name" value="N-terminal domain of alpha and beta subunits of F1 ATP synthase"/>
    <property type="match status" value="1"/>
</dbReference>
<dbReference type="SUPFAM" id="SSF52540">
    <property type="entry name" value="P-loop containing nucleoside triphosphate hydrolases"/>
    <property type="match status" value="1"/>
</dbReference>
<dbReference type="PROSITE" id="PS00152">
    <property type="entry name" value="ATPASE_ALPHA_BETA"/>
    <property type="match status" value="1"/>
</dbReference>
<protein>
    <recommendedName>
        <fullName evidence="1">A-type ATP synthase subunit A</fullName>
        <ecNumber evidence="1">7.1.2.2</ecNumber>
    </recommendedName>
</protein>
<keyword id="KW-0066">ATP synthesis</keyword>
<keyword id="KW-0067">ATP-binding</keyword>
<keyword id="KW-1003">Cell membrane</keyword>
<keyword id="KW-0375">Hydrogen ion transport</keyword>
<keyword id="KW-0406">Ion transport</keyword>
<keyword id="KW-0472">Membrane</keyword>
<keyword id="KW-0547">Nucleotide-binding</keyword>
<keyword id="KW-1185">Reference proteome</keyword>
<keyword id="KW-1278">Translocase</keyword>
<keyword id="KW-0813">Transport</keyword>
<feature type="chain" id="PRO_1000059352" description="A-type ATP synthase subunit A">
    <location>
        <begin position="1"/>
        <end position="592"/>
    </location>
</feature>
<feature type="binding site" evidence="1">
    <location>
        <begin position="231"/>
        <end position="238"/>
    </location>
    <ligand>
        <name>ATP</name>
        <dbReference type="ChEBI" id="CHEBI:30616"/>
    </ligand>
</feature>
<accession>A3DNQ6</accession>
<organism>
    <name type="scientific">Staphylothermus marinus (strain ATCC 43588 / DSM 3639 / JCM 9404 / F1)</name>
    <dbReference type="NCBI Taxonomy" id="399550"/>
    <lineage>
        <taxon>Archaea</taxon>
        <taxon>Thermoproteota</taxon>
        <taxon>Thermoprotei</taxon>
        <taxon>Desulfurococcales</taxon>
        <taxon>Desulfurococcaceae</taxon>
        <taxon>Staphylothermus</taxon>
    </lineage>
</organism>
<name>AATA_STAMF</name>
<sequence length="592" mass="66549">MSLGITGKIYRVSGPLVIAENMRGSKVYEVVEVGSDRLIGEIIGVEGDKAIIQVYEDTSGLRVGDPVYGTGYPLAAELGPGLVGSIYDGIQRPLPLLQELVGFFVKRGVKAKPLPRNKKWHFKPLVKQGEKVGPDDVIGYVEETPVIKHYIMIPPDTHGVVEEIVGEGEYTIVDPIARINGKEIVMLQKWPVRKPRPYREKLEHREPVLTGQRVIDFFFPLAKGGKAAIPGGFGTGKTVTLQQLTKWSAVDIAIYVGCGERGNEMADALHSFRRLVDPRTGKALVERSVFIANTSNMPVAARETSIFLGATIGEYFRDMGYHVLMVADSTSRWAEAMREISGRLEELPGEEGYPAYLGSRLASFYERSGYVKTLGRPDRTGSLTIMGAVSPPGADFSEPVTQATLRIVRALYALDVNLAYRRHYPAINWLISYSLYVDNVTDWWHKNIDPSWRELREKALAILQKEAELEELVRLVGAEALPEEDKLLLEVARMIREDFLQQNAFHEIDTYCPPRKAVLMMKAIMLFYELGLEAIKRGISMEKIRELKSRVKIARMKEIPNIDFEDAFKSLFEDIRRDFESLMKEAETIAEL</sequence>
<proteinExistence type="inferred from homology"/>
<evidence type="ECO:0000255" key="1">
    <source>
        <dbReference type="HAMAP-Rule" id="MF_00309"/>
    </source>
</evidence>
<gene>
    <name evidence="1" type="primary">atpA</name>
    <name type="ordered locus">Smar_1171</name>
</gene>
<comment type="function">
    <text evidence="1">Component of the A-type ATP synthase that produces ATP from ADP in the presence of a proton gradient across the membrane. The A chain is the catalytic subunit.</text>
</comment>
<comment type="catalytic activity">
    <reaction evidence="1">
        <text>ATP + H2O + 4 H(+)(in) = ADP + phosphate + 5 H(+)(out)</text>
        <dbReference type="Rhea" id="RHEA:57720"/>
        <dbReference type="ChEBI" id="CHEBI:15377"/>
        <dbReference type="ChEBI" id="CHEBI:15378"/>
        <dbReference type="ChEBI" id="CHEBI:30616"/>
        <dbReference type="ChEBI" id="CHEBI:43474"/>
        <dbReference type="ChEBI" id="CHEBI:456216"/>
        <dbReference type="EC" id="7.1.2.2"/>
    </reaction>
</comment>
<comment type="subunit">
    <text evidence="1">Has multiple subunits with at least A(3), B(3), C, D, E, F, H, I and proteolipid K(x).</text>
</comment>
<comment type="subcellular location">
    <subcellularLocation>
        <location evidence="1">Cell membrane</location>
        <topology evidence="1">Peripheral membrane protein</topology>
    </subcellularLocation>
</comment>
<comment type="similarity">
    <text evidence="1">Belongs to the ATPase alpha/beta chains family.</text>
</comment>
<reference key="1">
    <citation type="journal article" date="2009" name="BMC Genomics">
        <title>The complete genome sequence of Staphylothermus marinus reveals differences in sulfur metabolism among heterotrophic Crenarchaeota.</title>
        <authorList>
            <person name="Anderson I.J."/>
            <person name="Dharmarajan L."/>
            <person name="Rodriguez J."/>
            <person name="Hooper S."/>
            <person name="Porat I."/>
            <person name="Ulrich L.E."/>
            <person name="Elkins J.G."/>
            <person name="Mavromatis K."/>
            <person name="Sun H."/>
            <person name="Land M."/>
            <person name="Lapidus A."/>
            <person name="Lucas S."/>
            <person name="Barry K."/>
            <person name="Huber H."/>
            <person name="Zhulin I.B."/>
            <person name="Whitman W.B."/>
            <person name="Mukhopadhyay B."/>
            <person name="Woese C."/>
            <person name="Bristow J."/>
            <person name="Kyrpides N."/>
        </authorList>
    </citation>
    <scope>NUCLEOTIDE SEQUENCE [LARGE SCALE GENOMIC DNA]</scope>
    <source>
        <strain>ATCC 43588 / DSM 3639 / JCM 9404 / F1</strain>
    </source>
</reference>
<reference key="2">
    <citation type="journal article" date="2009" name="Stand. Genomic Sci.">
        <title>Complete genome sequence of Staphylothermus marinus Stetter and Fiala 1986 type strain F1.</title>
        <authorList>
            <person name="Anderson I.J."/>
            <person name="Sun H."/>
            <person name="Lapidus A."/>
            <person name="Copeland A."/>
            <person name="Glavina Del Rio T."/>
            <person name="Tice H."/>
            <person name="Dalin E."/>
            <person name="Lucas S."/>
            <person name="Barry K."/>
            <person name="Land M."/>
            <person name="Richardson P."/>
            <person name="Huber H."/>
            <person name="Kyrpides N.C."/>
        </authorList>
    </citation>
    <scope>NUCLEOTIDE SEQUENCE [LARGE SCALE GENOMIC DNA]</scope>
    <source>
        <strain>ATCC 43588 / DSM 3639 / JCM 9404 / F1</strain>
    </source>
</reference>